<sequence length="322" mass="36992">MKQFNEFYQKIATNRLGHWLNTLPAQLSHWHESELHGEFKHWQKTLDALPVVDANSAIDITNTVKVGESGDLDQGQFKRLENLMKKFKPWRKGPYHIHGLHIDTEWRSDFKWDRLAEHISDLSGKYVLDIGCGSGYHLWRMRGAGAKFVVGIDPTQLFLMQFNAIKHFIDDSPVHLLPLGVEQLPELKAFDTVFAMGVLYHRRSPIDFLYQLKAQLVKGGELVLETLIVDGDENTVLVPGERYAKMRNVWFLPSEKAMCAWLERCGFNNVRVVNTDITALDEQRKTEWIDTESLQDFLDPNDSSKTIEGYPAPKRAIFIANA</sequence>
<dbReference type="EC" id="2.5.1.-" evidence="1"/>
<dbReference type="EMBL" id="CP000083">
    <property type="protein sequence ID" value="AAZ27007.1"/>
    <property type="molecule type" value="Genomic_DNA"/>
</dbReference>
<dbReference type="RefSeq" id="WP_011042931.1">
    <property type="nucleotide sequence ID" value="NC_003910.7"/>
</dbReference>
<dbReference type="SMR" id="Q483D0"/>
<dbReference type="STRING" id="167879.CPS_2111"/>
<dbReference type="DNASU" id="3521263"/>
<dbReference type="KEGG" id="cps:CPS_2111"/>
<dbReference type="eggNOG" id="COG2227">
    <property type="taxonomic scope" value="Bacteria"/>
</dbReference>
<dbReference type="HOGENOM" id="CLU_052665_0_0_6"/>
<dbReference type="Proteomes" id="UP000000547">
    <property type="component" value="Chromosome"/>
</dbReference>
<dbReference type="GO" id="GO:0008168">
    <property type="term" value="F:methyltransferase activity"/>
    <property type="evidence" value="ECO:0007669"/>
    <property type="project" value="TreeGrafter"/>
</dbReference>
<dbReference type="GO" id="GO:0016765">
    <property type="term" value="F:transferase activity, transferring alkyl or aryl (other than methyl) groups"/>
    <property type="evidence" value="ECO:0007669"/>
    <property type="project" value="UniProtKB-UniRule"/>
</dbReference>
<dbReference type="GO" id="GO:0002098">
    <property type="term" value="P:tRNA wobble uridine modification"/>
    <property type="evidence" value="ECO:0007669"/>
    <property type="project" value="InterPro"/>
</dbReference>
<dbReference type="CDD" id="cd02440">
    <property type="entry name" value="AdoMet_MTases"/>
    <property type="match status" value="1"/>
</dbReference>
<dbReference type="Gene3D" id="3.40.50.150">
    <property type="entry name" value="Vaccinia Virus protein VP39"/>
    <property type="match status" value="1"/>
</dbReference>
<dbReference type="HAMAP" id="MF_01590">
    <property type="entry name" value="tRNA_carboxymethyltr_CmoB"/>
    <property type="match status" value="1"/>
</dbReference>
<dbReference type="InterPro" id="IPR010017">
    <property type="entry name" value="CmoB"/>
</dbReference>
<dbReference type="InterPro" id="IPR027555">
    <property type="entry name" value="Mo5U34_MeTrfas-like"/>
</dbReference>
<dbReference type="InterPro" id="IPR029063">
    <property type="entry name" value="SAM-dependent_MTases_sf"/>
</dbReference>
<dbReference type="NCBIfam" id="NF011650">
    <property type="entry name" value="PRK15068.1"/>
    <property type="match status" value="1"/>
</dbReference>
<dbReference type="NCBIfam" id="TIGR00452">
    <property type="entry name" value="tRNA 5-methoxyuridine(34)/uridine 5-oxyacetic acid(34) synthase CmoB"/>
    <property type="match status" value="1"/>
</dbReference>
<dbReference type="PANTHER" id="PTHR43464">
    <property type="entry name" value="METHYLTRANSFERASE"/>
    <property type="match status" value="1"/>
</dbReference>
<dbReference type="PANTHER" id="PTHR43464:SF95">
    <property type="entry name" value="TRNA U34 CARBOXYMETHYLTRANSFERASE"/>
    <property type="match status" value="1"/>
</dbReference>
<dbReference type="Pfam" id="PF08003">
    <property type="entry name" value="Methyltransf_9"/>
    <property type="match status" value="1"/>
</dbReference>
<dbReference type="SUPFAM" id="SSF53335">
    <property type="entry name" value="S-adenosyl-L-methionine-dependent methyltransferases"/>
    <property type="match status" value="1"/>
</dbReference>
<proteinExistence type="inferred from homology"/>
<accession>Q483D0</accession>
<organism>
    <name type="scientific">Colwellia psychrerythraea (strain 34H / ATCC BAA-681)</name>
    <name type="common">Vibrio psychroerythus</name>
    <dbReference type="NCBI Taxonomy" id="167879"/>
    <lineage>
        <taxon>Bacteria</taxon>
        <taxon>Pseudomonadati</taxon>
        <taxon>Pseudomonadota</taxon>
        <taxon>Gammaproteobacteria</taxon>
        <taxon>Alteromonadales</taxon>
        <taxon>Colwelliaceae</taxon>
        <taxon>Colwellia</taxon>
    </lineage>
</organism>
<name>CMOB_COLP3</name>
<comment type="function">
    <text evidence="1">Catalyzes carboxymethyl transfer from carboxy-S-adenosyl-L-methionine (Cx-SAM) to 5-hydroxyuridine (ho5U) to form 5-carboxymethoxyuridine (cmo5U) at position 34 in tRNAs.</text>
</comment>
<comment type="catalytic activity">
    <reaction evidence="1">
        <text>carboxy-S-adenosyl-L-methionine + 5-hydroxyuridine(34) in tRNA = 5-carboxymethoxyuridine(34) in tRNA + S-adenosyl-L-homocysteine + H(+)</text>
        <dbReference type="Rhea" id="RHEA:52848"/>
        <dbReference type="Rhea" id="RHEA-COMP:13381"/>
        <dbReference type="Rhea" id="RHEA-COMP:13383"/>
        <dbReference type="ChEBI" id="CHEBI:15378"/>
        <dbReference type="ChEBI" id="CHEBI:57856"/>
        <dbReference type="ChEBI" id="CHEBI:134278"/>
        <dbReference type="ChEBI" id="CHEBI:136877"/>
        <dbReference type="ChEBI" id="CHEBI:136879"/>
    </reaction>
</comment>
<comment type="subunit">
    <text evidence="1">Homotetramer.</text>
</comment>
<comment type="similarity">
    <text evidence="1">Belongs to the class I-like SAM-binding methyltransferase superfamily. CmoB family.</text>
</comment>
<evidence type="ECO:0000255" key="1">
    <source>
        <dbReference type="HAMAP-Rule" id="MF_01590"/>
    </source>
</evidence>
<feature type="chain" id="PRO_0000313910" description="tRNA U34 carboxymethyltransferase">
    <location>
        <begin position="1"/>
        <end position="322"/>
    </location>
</feature>
<feature type="binding site" evidence="1">
    <location>
        <position position="92"/>
    </location>
    <ligand>
        <name>carboxy-S-adenosyl-L-methionine</name>
        <dbReference type="ChEBI" id="CHEBI:134278"/>
    </ligand>
</feature>
<feature type="binding site" evidence="1">
    <location>
        <position position="106"/>
    </location>
    <ligand>
        <name>carboxy-S-adenosyl-L-methionine</name>
        <dbReference type="ChEBI" id="CHEBI:134278"/>
    </ligand>
</feature>
<feature type="binding site" evidence="1">
    <location>
        <position position="111"/>
    </location>
    <ligand>
        <name>carboxy-S-adenosyl-L-methionine</name>
        <dbReference type="ChEBI" id="CHEBI:134278"/>
    </ligand>
</feature>
<feature type="binding site" evidence="1">
    <location>
        <position position="131"/>
    </location>
    <ligand>
        <name>carboxy-S-adenosyl-L-methionine</name>
        <dbReference type="ChEBI" id="CHEBI:134278"/>
    </ligand>
</feature>
<feature type="binding site" evidence="1">
    <location>
        <begin position="153"/>
        <end position="155"/>
    </location>
    <ligand>
        <name>carboxy-S-adenosyl-L-methionine</name>
        <dbReference type="ChEBI" id="CHEBI:134278"/>
    </ligand>
</feature>
<feature type="binding site" evidence="1">
    <location>
        <begin position="181"/>
        <end position="182"/>
    </location>
    <ligand>
        <name>carboxy-S-adenosyl-L-methionine</name>
        <dbReference type="ChEBI" id="CHEBI:134278"/>
    </ligand>
</feature>
<feature type="binding site" evidence="1">
    <location>
        <position position="196"/>
    </location>
    <ligand>
        <name>carboxy-S-adenosyl-L-methionine</name>
        <dbReference type="ChEBI" id="CHEBI:134278"/>
    </ligand>
</feature>
<feature type="binding site" evidence="1">
    <location>
        <position position="200"/>
    </location>
    <ligand>
        <name>carboxy-S-adenosyl-L-methionine</name>
        <dbReference type="ChEBI" id="CHEBI:134278"/>
    </ligand>
</feature>
<feature type="binding site" evidence="1">
    <location>
        <position position="315"/>
    </location>
    <ligand>
        <name>carboxy-S-adenosyl-L-methionine</name>
        <dbReference type="ChEBI" id="CHEBI:134278"/>
    </ligand>
</feature>
<keyword id="KW-0808">Transferase</keyword>
<keyword id="KW-0819">tRNA processing</keyword>
<protein>
    <recommendedName>
        <fullName evidence="1">tRNA U34 carboxymethyltransferase</fullName>
        <ecNumber evidence="1">2.5.1.-</ecNumber>
    </recommendedName>
</protein>
<reference key="1">
    <citation type="journal article" date="2005" name="Proc. Natl. Acad. Sci. U.S.A.">
        <title>The psychrophilic lifestyle as revealed by the genome sequence of Colwellia psychrerythraea 34H through genomic and proteomic analyses.</title>
        <authorList>
            <person name="Methe B.A."/>
            <person name="Nelson K.E."/>
            <person name="Deming J.W."/>
            <person name="Momen B."/>
            <person name="Melamud E."/>
            <person name="Zhang X."/>
            <person name="Moult J."/>
            <person name="Madupu R."/>
            <person name="Nelson W.C."/>
            <person name="Dodson R.J."/>
            <person name="Brinkac L.M."/>
            <person name="Daugherty S.C."/>
            <person name="Durkin A.S."/>
            <person name="DeBoy R.T."/>
            <person name="Kolonay J.F."/>
            <person name="Sullivan S.A."/>
            <person name="Zhou L."/>
            <person name="Davidsen T.M."/>
            <person name="Wu M."/>
            <person name="Huston A.L."/>
            <person name="Lewis M."/>
            <person name="Weaver B."/>
            <person name="Weidman J.F."/>
            <person name="Khouri H."/>
            <person name="Utterback T.R."/>
            <person name="Feldblyum T.V."/>
            <person name="Fraser C.M."/>
        </authorList>
    </citation>
    <scope>NUCLEOTIDE SEQUENCE [LARGE SCALE GENOMIC DNA]</scope>
    <source>
        <strain>34H / ATCC BAA-681</strain>
    </source>
</reference>
<gene>
    <name evidence="1" type="primary">cmoB</name>
    <name type="ordered locus">CPS_2111</name>
</gene>